<feature type="signal peptide" evidence="2">
    <location>
        <begin position="1"/>
        <end position="21"/>
    </location>
</feature>
<feature type="chain" id="PRO_0000024615" description="Apical membrane antigen 1">
    <location>
        <begin position="22"/>
        <end position="562"/>
    </location>
</feature>
<feature type="topological domain" description="Extracellular" evidence="2">
    <location>
        <begin position="22"/>
        <end position="484"/>
    </location>
</feature>
<feature type="transmembrane region" description="Helical" evidence="2">
    <location>
        <begin position="485"/>
        <end position="507"/>
    </location>
</feature>
<feature type="topological domain" description="Cytoplasmic" evidence="2">
    <location>
        <begin position="508"/>
        <end position="562"/>
    </location>
</feature>
<feature type="region of interest" description="Disordered" evidence="3">
    <location>
        <begin position="519"/>
        <end position="543"/>
    </location>
</feature>
<feature type="glycosylation site" description="N-linked (GlcNAc...) asparagine" evidence="2">
    <location>
        <position position="84"/>
    </location>
</feature>
<feature type="glycosylation site" description="N-linked (GlcNAc...) asparagine" evidence="2">
    <location>
        <position position="176"/>
    </location>
</feature>
<feature type="glycosylation site" description="N-linked (GlcNAc...) asparagine" evidence="2">
    <location>
        <position position="226"/>
    </location>
</feature>
<feature type="glycosylation site" description="N-linked (GlcNAc...) asparagine" evidence="2">
    <location>
        <position position="405"/>
    </location>
</feature>
<feature type="glycosylation site" description="N-linked (GlcNAc...) asparagine" evidence="2">
    <location>
        <position position="441"/>
    </location>
</feature>
<feature type="disulfide bond" evidence="1">
    <location>
        <begin position="94"/>
        <end position="247"/>
    </location>
</feature>
<feature type="disulfide bond" evidence="1">
    <location>
        <begin position="162"/>
        <end position="192"/>
    </location>
</feature>
<feature type="disulfide bond" evidence="1">
    <location>
        <begin position="208"/>
        <end position="220"/>
    </location>
</feature>
<feature type="disulfide bond" evidence="1">
    <location>
        <begin position="265"/>
        <end position="363"/>
    </location>
</feature>
<feature type="disulfide bond" evidence="1">
    <location>
        <begin position="282"/>
        <end position="354"/>
    </location>
</feature>
<feature type="disulfide bond" evidence="1">
    <location>
        <begin position="388"/>
        <end position="444"/>
    </location>
</feature>
<feature type="disulfide bond" evidence="1">
    <location>
        <begin position="432"/>
        <end position="449"/>
    </location>
</feature>
<feature type="disulfide bond" evidence="1">
    <location>
        <begin position="434"/>
        <end position="451"/>
    </location>
</feature>
<gene>
    <name type="primary">AMA-1</name>
    <name type="synonym">AG352</name>
</gene>
<comment type="function">
    <text>Involved in parasite invasion of erythrocytes.</text>
</comment>
<comment type="subcellular location">
    <subcellularLocation>
        <location>Membrane</location>
        <topology>Single-pass type I membrane protein</topology>
    </subcellularLocation>
</comment>
<comment type="similarity">
    <text evidence="4">Belongs to the apicomplexan parasites AMA1 family.</text>
</comment>
<reference key="1">
    <citation type="journal article" date="1990" name="Mol. Biochem. Parasitol.">
        <title>Apical membrane antigen of Plasmodium fragile.</title>
        <authorList>
            <person name="Peterson M.G."/>
            <person name="Nguyen-Dinh P."/>
            <person name="Marshall V.M."/>
            <person name="Elliott J.F."/>
            <person name="Collins W.E."/>
            <person name="Anders R.F."/>
            <person name="Kemp D.J."/>
        </authorList>
    </citation>
    <scope>NUCLEOTIDE SEQUENCE [GENOMIC DNA]</scope>
</reference>
<protein>
    <recommendedName>
        <fullName>Apical membrane antigen 1</fullName>
    </recommendedName>
    <alternativeName>
        <fullName>Merozoite surface antigen</fullName>
    </alternativeName>
</protein>
<accession>P22622</accession>
<evidence type="ECO:0000250" key="1"/>
<evidence type="ECO:0000255" key="2"/>
<evidence type="ECO:0000256" key="3">
    <source>
        <dbReference type="SAM" id="MobiDB-lite"/>
    </source>
</evidence>
<evidence type="ECO:0000305" key="4"/>
<proteinExistence type="inferred from homology"/>
<sequence>MNKIYCILFLSAQCLVHMGKCEPNQKPSRLTRSAKNVLLEQEPMVERSTRMSNPWKAFMEKYDIEKTHSSGIRVDLGEDAEVGNSSYRIPAGKCPVFGKGIVIQNSEVSFLTPVATGNQKLKDGGFAFPQANDHISPISIKNLRERYKENPDLMKLNDLALCKTHAASFVMEMDKNSSYRHPAVYDEDKKICYMLYLSAQENMGPRYCSKDAENKDAMFCFKPDKNETFDHLAYLSKNVVNDWQNKCPRKNLGNSKFGLWVDGNCEEIPYVQDVQAKDLRECNRIVFEASASDQPTQYEEELTDYQKIQEGFRQNDQGMIKSAFLPVGAFNSDNFKSKGRGYNWANFDTENKVCYLFNAKPTCLINDKNFIATTALSHPQEVDNEFPCSIYKDEMEREMRKESRNMSLYNVDKARIVLPRIFISNDKDSLKCPCAPEHITNSTCNFYVCNCVEKRAEIKENNEVAIKEEFKQDYQYAQGESKNQMLLIIIGITGGVCVVALASMFYFRKKAHNDKYDKMEQADGYGKPTTRKDEMLDPEASFWGEEKRASHTTPVLMEKPYY</sequence>
<keyword id="KW-1015">Disulfide bond</keyword>
<keyword id="KW-0325">Glycoprotein</keyword>
<keyword id="KW-0461">Malaria</keyword>
<keyword id="KW-0472">Membrane</keyword>
<keyword id="KW-0732">Signal</keyword>
<keyword id="KW-0812">Transmembrane</keyword>
<keyword id="KW-1133">Transmembrane helix</keyword>
<name>AMA1_PLAFR</name>
<dbReference type="EMBL" id="M29898">
    <property type="protein sequence ID" value="AAA29474.1"/>
    <property type="molecule type" value="Genomic_DNA"/>
</dbReference>
<dbReference type="PIR" id="A44944">
    <property type="entry name" value="A44944"/>
</dbReference>
<dbReference type="SMR" id="P22622"/>
<dbReference type="GlyCosmos" id="P22622">
    <property type="glycosylation" value="5 sites, No reported glycans"/>
</dbReference>
<dbReference type="VEuPathDB" id="PlasmoDB:AK88_00071"/>
<dbReference type="GO" id="GO:0016020">
    <property type="term" value="C:membrane"/>
    <property type="evidence" value="ECO:0007669"/>
    <property type="project" value="UniProtKB-SubCell"/>
</dbReference>
<dbReference type="Gene3D" id="6.10.250.430">
    <property type="match status" value="1"/>
</dbReference>
<dbReference type="Gene3D" id="4.10.1010.10">
    <property type="entry name" value="Apical membrane antigen 1"/>
    <property type="match status" value="1"/>
</dbReference>
<dbReference type="Gene3D" id="3.50.4.10">
    <property type="entry name" value="Hepatocyte Growth Factor"/>
    <property type="match status" value="2"/>
</dbReference>
<dbReference type="InterPro" id="IPR003298">
    <property type="entry name" value="Apmem_Ag1"/>
</dbReference>
<dbReference type="InterPro" id="IPR024056">
    <property type="entry name" value="Apmem_Ag1_dom_sf"/>
</dbReference>
<dbReference type="Pfam" id="PF02430">
    <property type="entry name" value="AMA-1"/>
    <property type="match status" value="1"/>
</dbReference>
<dbReference type="PRINTS" id="PR01361">
    <property type="entry name" value="MEROZOITESA"/>
</dbReference>
<dbReference type="SMART" id="SM00815">
    <property type="entry name" value="AMA-1"/>
    <property type="match status" value="1"/>
</dbReference>
<dbReference type="SUPFAM" id="SSF82910">
    <property type="entry name" value="Apical membrane antigen 1"/>
    <property type="match status" value="1"/>
</dbReference>
<organism>
    <name type="scientific">Plasmodium fragile</name>
    <dbReference type="NCBI Taxonomy" id="5857"/>
    <lineage>
        <taxon>Eukaryota</taxon>
        <taxon>Sar</taxon>
        <taxon>Alveolata</taxon>
        <taxon>Apicomplexa</taxon>
        <taxon>Aconoidasida</taxon>
        <taxon>Haemosporida</taxon>
        <taxon>Plasmodiidae</taxon>
        <taxon>Plasmodium</taxon>
        <taxon>Plasmodium (Plasmodium)</taxon>
    </lineage>
</organism>